<name>RL7_NITV9</name>
<reference key="1">
    <citation type="submission" date="2008-10" db="EMBL/GenBank/DDBJ databases">
        <title>Complete sequence of Desulfovibrio vulgaris str. 'Miyazaki F'.</title>
        <authorList>
            <person name="Lucas S."/>
            <person name="Copeland A."/>
            <person name="Lapidus A."/>
            <person name="Glavina del Rio T."/>
            <person name="Dalin E."/>
            <person name="Tice H."/>
            <person name="Bruce D."/>
            <person name="Goodwin L."/>
            <person name="Pitluck S."/>
            <person name="Sims D."/>
            <person name="Brettin T."/>
            <person name="Detter J.C."/>
            <person name="Han C."/>
            <person name="Larimer F."/>
            <person name="Land M."/>
            <person name="Hauser L."/>
            <person name="Kyrpides N."/>
            <person name="Mikhailova N."/>
            <person name="Hazen T.C."/>
            <person name="Richardson P."/>
        </authorList>
    </citation>
    <scope>NUCLEOTIDE SEQUENCE [LARGE SCALE GENOMIC DNA]</scope>
    <source>
        <strain>DSM 19637 / Miyazaki F</strain>
    </source>
</reference>
<reference key="2">
    <citation type="journal article" date="1984" name="Biochim. Biophys. Acta">
        <title>Complete amino-acid sequence of an L7/L12-type ribosomal protein from Desulfovibrio vulgaris, Miyazaki.</title>
        <authorList>
            <person name="Itoh T."/>
            <person name="Otaka E."/>
        </authorList>
    </citation>
    <scope>PROTEIN SEQUENCE OF 2-127</scope>
    <scope>METHYLATION AT LYS-77 AND LYS-88</scope>
</reference>
<evidence type="ECO:0000255" key="1">
    <source>
        <dbReference type="HAMAP-Rule" id="MF_00368"/>
    </source>
</evidence>
<evidence type="ECO:0000269" key="2">
    <source ref="2"/>
</evidence>
<evidence type="ECO:0000305" key="3"/>
<sequence length="127" mass="13344">MSSITKEQVVEFIANMTVLELSEFIKELEEKFGVSAAAPAMAMVAAGPAEAAPAEEEKTEFDVILKAAGANKIGVIKVVRALTGLGLKEAKDKVDGAPSTLKEAVSKEEAEEAKKQLVEAGAEVEVK</sequence>
<feature type="initiator methionine" description="Removed" evidence="2">
    <location>
        <position position="1"/>
    </location>
</feature>
<feature type="chain" id="PRO_0000157527" description="Large ribosomal subunit protein bL12">
    <location>
        <begin position="2"/>
        <end position="127"/>
    </location>
</feature>
<feature type="modified residue" description="N6-methyllysine" evidence="2">
    <location>
        <position position="77"/>
    </location>
</feature>
<feature type="modified residue" description="N6-methyllysine" evidence="2">
    <location>
        <position position="88"/>
    </location>
</feature>
<feature type="sequence conflict" description="In Ref. 2; AA sequence." evidence="3" ref="2">
    <original>AM</original>
    <variation>MA</variation>
    <location>
        <begin position="42"/>
        <end position="43"/>
    </location>
</feature>
<gene>
    <name evidence="1" type="primary">rplL</name>
    <name type="ordered locus">DvMF_1454</name>
</gene>
<organism>
    <name type="scientific">Nitratidesulfovibrio vulgaris (strain DSM 19637 / Miyazaki F)</name>
    <name type="common">Desulfovibrio vulgaris</name>
    <dbReference type="NCBI Taxonomy" id="883"/>
    <lineage>
        <taxon>Bacteria</taxon>
        <taxon>Pseudomonadati</taxon>
        <taxon>Thermodesulfobacteriota</taxon>
        <taxon>Desulfovibrionia</taxon>
        <taxon>Desulfovibrionales</taxon>
        <taxon>Desulfovibrionaceae</taxon>
        <taxon>Nitratidesulfovibrio</taxon>
    </lineage>
</organism>
<accession>P02393</accession>
<accession>B8DLM6</accession>
<dbReference type="EMBL" id="CP001197">
    <property type="protein sequence ID" value="ACL08402.1"/>
    <property type="molecule type" value="Genomic_DNA"/>
</dbReference>
<dbReference type="PIR" id="A02769">
    <property type="entry name" value="R5DV7"/>
</dbReference>
<dbReference type="SMR" id="P02393"/>
<dbReference type="STRING" id="883.DvMF_1454"/>
<dbReference type="KEGG" id="dvm:DvMF_1454"/>
<dbReference type="eggNOG" id="COG0222">
    <property type="taxonomic scope" value="Bacteria"/>
</dbReference>
<dbReference type="HOGENOM" id="CLU_086499_3_0_7"/>
<dbReference type="OrthoDB" id="9811748at2"/>
<dbReference type="GO" id="GO:0022625">
    <property type="term" value="C:cytosolic large ribosomal subunit"/>
    <property type="evidence" value="ECO:0007669"/>
    <property type="project" value="TreeGrafter"/>
</dbReference>
<dbReference type="GO" id="GO:0003729">
    <property type="term" value="F:mRNA binding"/>
    <property type="evidence" value="ECO:0007669"/>
    <property type="project" value="TreeGrafter"/>
</dbReference>
<dbReference type="GO" id="GO:0003735">
    <property type="term" value="F:structural constituent of ribosome"/>
    <property type="evidence" value="ECO:0007669"/>
    <property type="project" value="InterPro"/>
</dbReference>
<dbReference type="GO" id="GO:0006412">
    <property type="term" value="P:translation"/>
    <property type="evidence" value="ECO:0007669"/>
    <property type="project" value="UniProtKB-UniRule"/>
</dbReference>
<dbReference type="CDD" id="cd00387">
    <property type="entry name" value="Ribosomal_L7_L12"/>
    <property type="match status" value="1"/>
</dbReference>
<dbReference type="FunFam" id="3.30.1390.10:FF:000001">
    <property type="entry name" value="50S ribosomal protein L7/L12"/>
    <property type="match status" value="1"/>
</dbReference>
<dbReference type="Gene3D" id="3.30.1390.10">
    <property type="match status" value="1"/>
</dbReference>
<dbReference type="Gene3D" id="1.20.5.710">
    <property type="entry name" value="Single helix bin"/>
    <property type="match status" value="1"/>
</dbReference>
<dbReference type="HAMAP" id="MF_00368">
    <property type="entry name" value="Ribosomal_bL12"/>
    <property type="match status" value="1"/>
</dbReference>
<dbReference type="InterPro" id="IPR000206">
    <property type="entry name" value="Ribosomal_bL12"/>
</dbReference>
<dbReference type="InterPro" id="IPR013823">
    <property type="entry name" value="Ribosomal_bL12_C"/>
</dbReference>
<dbReference type="InterPro" id="IPR014719">
    <property type="entry name" value="Ribosomal_bL12_C/ClpS-like"/>
</dbReference>
<dbReference type="InterPro" id="IPR008932">
    <property type="entry name" value="Ribosomal_bL12_oligo"/>
</dbReference>
<dbReference type="InterPro" id="IPR036235">
    <property type="entry name" value="Ribosomal_bL12_oligo_N_sf"/>
</dbReference>
<dbReference type="NCBIfam" id="TIGR00855">
    <property type="entry name" value="L12"/>
    <property type="match status" value="1"/>
</dbReference>
<dbReference type="PANTHER" id="PTHR45987">
    <property type="entry name" value="39S RIBOSOMAL PROTEIN L12"/>
    <property type="match status" value="1"/>
</dbReference>
<dbReference type="PANTHER" id="PTHR45987:SF4">
    <property type="entry name" value="LARGE RIBOSOMAL SUBUNIT PROTEIN BL12M"/>
    <property type="match status" value="1"/>
</dbReference>
<dbReference type="Pfam" id="PF00542">
    <property type="entry name" value="Ribosomal_L12"/>
    <property type="match status" value="1"/>
</dbReference>
<dbReference type="Pfam" id="PF16320">
    <property type="entry name" value="Ribosomal_L12_N"/>
    <property type="match status" value="1"/>
</dbReference>
<dbReference type="SUPFAM" id="SSF54736">
    <property type="entry name" value="ClpS-like"/>
    <property type="match status" value="1"/>
</dbReference>
<dbReference type="SUPFAM" id="SSF48300">
    <property type="entry name" value="Ribosomal protein L7/12, oligomerisation (N-terminal) domain"/>
    <property type="match status" value="1"/>
</dbReference>
<keyword id="KW-0903">Direct protein sequencing</keyword>
<keyword id="KW-0488">Methylation</keyword>
<keyword id="KW-0687">Ribonucleoprotein</keyword>
<keyword id="KW-0689">Ribosomal protein</keyword>
<comment type="function">
    <text evidence="1">Forms part of the ribosomal stalk which helps the ribosome interact with GTP-bound translation factors. Is thus essential for accurate translation.</text>
</comment>
<comment type="subunit">
    <text evidence="1">Homodimer. Part of the ribosomal stalk of the 50S ribosomal subunit. Forms a multimeric L10(L12)X complex, where L10 forms an elongated spine to which 2 to 4 L12 dimers bind in a sequential fashion. Binds GTP-bound translation factors.</text>
</comment>
<comment type="similarity">
    <text evidence="1">Belongs to the bacterial ribosomal protein bL12 family.</text>
</comment>
<proteinExistence type="evidence at protein level"/>
<protein>
    <recommendedName>
        <fullName evidence="1">Large ribosomal subunit protein bL12</fullName>
    </recommendedName>
    <alternativeName>
        <fullName evidence="3">50S ribosomal protein L7/L12</fullName>
    </alternativeName>
</protein>